<organism>
    <name type="scientific">Caenorhabditis elegans</name>
    <dbReference type="NCBI Taxonomy" id="6239"/>
    <lineage>
        <taxon>Eukaryota</taxon>
        <taxon>Metazoa</taxon>
        <taxon>Ecdysozoa</taxon>
        <taxon>Nematoda</taxon>
        <taxon>Chromadorea</taxon>
        <taxon>Rhabditida</taxon>
        <taxon>Rhabditina</taxon>
        <taxon>Rhabditomorpha</taxon>
        <taxon>Rhabditoidea</taxon>
        <taxon>Rhabditidae</taxon>
        <taxon>Peloderinae</taxon>
        <taxon>Caenorhabditis</taxon>
    </lineage>
</organism>
<sequence>MSYNGSYHQNHHSTLQVKSKFDSEWRRFSIPMHSASGVSYDGFRSLVEKLHHLESVQFTLCYNSTGGDLLPITNDDNLRKSFESARPLLRLLIQRRGESWEEKYGYGTDSDKRWKGISSLMAQKPPKRSYSISNPEDFRQVSAIIDVDIVPEAHRRVRLCKHGQERPLGFYIRDGTSVRVTERGVVKVSGIFISRLVDGGLAESTGLLGVNDEVLEVNGIEVLGKTLDQVTDMMVANAHNLIITVKPANQRNTLSRGPSQQGTPNASEMSAATAAATGGIQRPMKMNGSSDGSYHPKQHDANDSDSGED</sequence>
<reference evidence="13 14" key="1">
    <citation type="journal article" date="1999" name="Development">
        <title>PAR-6 is a conserved PDZ domain-containing protein that colocalizes with PAR-3 in Caenorhabditis elegans embryos.</title>
        <authorList>
            <person name="Hung T.-J."/>
            <person name="Kemphues K.J."/>
        </authorList>
    </citation>
    <scope>NUCLEOTIDE SEQUENCE [MRNA] (ISOFORM A)</scope>
    <scope>FUNCTION</scope>
    <scope>SUBCELLULAR LOCATION</scope>
    <scope>TISSUE SPECIFICITY</scope>
    <source>
        <strain evidence="14">Bristol N2</strain>
        <tissue evidence="12">Embryo</tissue>
    </source>
</reference>
<reference key="2">
    <citation type="journal article" date="1998" name="Science">
        <title>Genome sequence of the nematode C. elegans: a platform for investigating biology.</title>
        <authorList>
            <consortium name="The C. elegans sequencing consortium"/>
        </authorList>
    </citation>
    <scope>NUCLEOTIDE SEQUENCE [LARGE SCALE GENOMIC DNA]</scope>
    <scope>ALTERNATIVE SPLICING</scope>
    <source>
        <strain>Bristol N2</strain>
    </source>
</reference>
<reference evidence="13" key="3">
    <citation type="journal article" date="1996" name="Development">
        <title>par-6, a gene involved in the establishment of asymmetry in early C. elegans embryos, mediates the asymmetric localization of PAR-3.</title>
        <authorList>
            <person name="Watts J.L."/>
            <person name="Etemad-Moghadam B."/>
            <person name="Guo S."/>
            <person name="Boyd L."/>
            <person name="Draper B.W."/>
            <person name="Mello C.C."/>
            <person name="Priess J.R."/>
            <person name="Kemphues K.J."/>
        </authorList>
    </citation>
    <scope>FUNCTION</scope>
    <scope>INTERACTION WITH PAR-3</scope>
    <scope>DEVELOPMENTAL STAGE</scope>
    <source>
        <strain evidence="11">Bristol N2</strain>
    </source>
</reference>
<reference key="4">
    <citation type="journal article" date="2000" name="Development">
        <title>MES-1, a protein required for unequal divisions of the germline in early C. elegans embryos, resembles receptor tyrosine kinases and is localized to the boundary between the germline and gut cells.</title>
        <authorList>
            <person name="Berkowitz L.A."/>
            <person name="Strome S."/>
        </authorList>
    </citation>
    <scope>FUNCTION</scope>
</reference>
<reference key="5">
    <citation type="journal article" date="2001" name="Curr. Biol.">
        <title>CDC-42 controls early cell polarity and spindle orientation in C. elegans.</title>
        <authorList>
            <person name="Gotta M."/>
            <person name="Abraham M.C."/>
            <person name="Ahringer J."/>
        </authorList>
    </citation>
    <scope>INTERACTION WITH CDC-42</scope>
    <source>
        <strain evidence="6">Bristol N2</strain>
    </source>
</reference>
<reference key="6">
    <citation type="journal article" date="2003" name="Development">
        <title>C. elegans PAR-3 and PAR-6 are required for apicobasal asymmetries associated with cell adhesion and gastrulation.</title>
        <authorList>
            <person name="Nance J."/>
            <person name="Munro E.M."/>
            <person name="Priess J.R."/>
        </authorList>
    </citation>
    <scope>FUNCTION</scope>
    <scope>TISSUE SPECIFICITY</scope>
</reference>
<reference key="7">
    <citation type="journal article" date="2004" name="Development">
        <title>PAR-3 is required for epithelial cell polarity in the distal spermatheca of C. elegans.</title>
        <authorList>
            <person name="Aono S."/>
            <person name="Legouis R."/>
            <person name="Hoose W.A."/>
            <person name="Kemphues K.J."/>
        </authorList>
    </citation>
    <scope>FUNCTION</scope>
    <scope>TISSUE SPECIFICITY</scope>
</reference>
<reference key="8">
    <citation type="journal article" date="2006" name="Nat. Cell Biol.">
        <title>Cyclin E-Cdk2 temporally regulates centrosome assembly and establishment of polarity in Caenorhabditis elegans embryos.</title>
        <authorList>
            <person name="Cowan C.R."/>
            <person name="Hyman A.A."/>
        </authorList>
    </citation>
    <scope>SUBCELLULAR LOCATION</scope>
</reference>
<reference key="9">
    <citation type="journal article" date="2012" name="Nat. Cell Biol.">
        <title>Caenorhabditis elegans screen reveals role of PAR-5 in RAB-11-recycling endosome positioning and apicobasal cell polarity.</title>
        <authorList>
            <person name="Winter J.F."/>
            <person name="Hoepfner S."/>
            <person name="Korn K."/>
            <person name="Farnung B.O."/>
            <person name="Bradshaw C.R."/>
            <person name="Marsico G."/>
            <person name="Volkmer M."/>
            <person name="Habermann B."/>
            <person name="Zerial M."/>
        </authorList>
    </citation>
    <scope>FUNCTION</scope>
    <scope>DISRUPTION PHENOTYPE</scope>
</reference>
<feature type="chain" id="PRO_0000112520" description="Partitioning defective protein 6">
    <location>
        <begin position="1"/>
        <end position="309"/>
    </location>
</feature>
<feature type="domain" description="PB1" evidence="3">
    <location>
        <begin position="14"/>
        <end position="96"/>
    </location>
</feature>
<feature type="domain" description="Pseudo-CRIB" evidence="13">
    <location>
        <begin position="132"/>
        <end position="149"/>
    </location>
</feature>
<feature type="domain" description="PDZ" evidence="2">
    <location>
        <begin position="156"/>
        <end position="249"/>
    </location>
</feature>
<feature type="region of interest" description="Disordered" evidence="4">
    <location>
        <begin position="249"/>
        <end position="309"/>
    </location>
</feature>
<feature type="compositionally biased region" description="Polar residues" evidence="4">
    <location>
        <begin position="249"/>
        <end position="270"/>
    </location>
</feature>
<feature type="splice variant" id="VSP_034690" description="In isoform b." evidence="13">
    <location>
        <begin position="1"/>
        <end position="120"/>
    </location>
</feature>
<evidence type="ECO:0000250" key="1"/>
<evidence type="ECO:0000255" key="2">
    <source>
        <dbReference type="PROSITE-ProRule" id="PRU00143"/>
    </source>
</evidence>
<evidence type="ECO:0000255" key="3">
    <source>
        <dbReference type="PROSITE-ProRule" id="PRU01081"/>
    </source>
</evidence>
<evidence type="ECO:0000256" key="4">
    <source>
        <dbReference type="SAM" id="MobiDB-lite"/>
    </source>
</evidence>
<evidence type="ECO:0000269" key="5">
    <source>
    </source>
</evidence>
<evidence type="ECO:0000269" key="6">
    <source>
    </source>
</evidence>
<evidence type="ECO:0000269" key="7">
    <source>
    </source>
</evidence>
<evidence type="ECO:0000269" key="8">
    <source>
    </source>
</evidence>
<evidence type="ECO:0000269" key="9">
    <source>
    </source>
</evidence>
<evidence type="ECO:0000269" key="10">
    <source>
    </source>
</evidence>
<evidence type="ECO:0000269" key="11">
    <source>
    </source>
</evidence>
<evidence type="ECO:0000269" key="12">
    <source>
    </source>
</evidence>
<evidence type="ECO:0000305" key="13"/>
<evidence type="ECO:0000312" key="14">
    <source>
        <dbReference type="EMBL" id="AAD15926.1"/>
    </source>
</evidence>
<evidence type="ECO:0000312" key="15">
    <source>
        <dbReference type="EMBL" id="CAB61018.2"/>
    </source>
</evidence>
<keyword id="KW-0025">Alternative splicing</keyword>
<keyword id="KW-0130">Cell adhesion</keyword>
<keyword id="KW-0131">Cell cycle</keyword>
<keyword id="KW-0132">Cell division</keyword>
<keyword id="KW-0965">Cell junction</keyword>
<keyword id="KW-1003">Cell membrane</keyword>
<keyword id="KW-0963">Cytoplasm</keyword>
<keyword id="KW-0217">Developmental protein</keyword>
<keyword id="KW-0221">Differentiation</keyword>
<keyword id="KW-0278">Fertilization</keyword>
<keyword id="KW-0306">Gastrulation</keyword>
<keyword id="KW-0334">Gonadal differentiation</keyword>
<keyword id="KW-0472">Membrane</keyword>
<keyword id="KW-1185">Reference proteome</keyword>
<keyword id="KW-0796">Tight junction</keyword>
<name>PAR6_CAEEL</name>
<dbReference type="EMBL" id="AF070968">
    <property type="protein sequence ID" value="AAD15926.1"/>
    <property type="molecule type" value="mRNA"/>
</dbReference>
<dbReference type="EMBL" id="Z82053">
    <property type="protein sequence ID" value="CAB61018.2"/>
    <property type="molecule type" value="Genomic_DNA"/>
</dbReference>
<dbReference type="EMBL" id="Z82053">
    <property type="protein sequence ID" value="CAJ85768.1"/>
    <property type="molecule type" value="Genomic_DNA"/>
</dbReference>
<dbReference type="PIR" id="T43216">
    <property type="entry name" value="T43216"/>
</dbReference>
<dbReference type="RefSeq" id="NP_001040687.1">
    <molecule id="Q9NAN2-1"/>
    <property type="nucleotide sequence ID" value="NM_001047222.7"/>
</dbReference>
<dbReference type="RefSeq" id="NP_001040688.1">
    <molecule id="Q9NAN2-2"/>
    <property type="nucleotide sequence ID" value="NM_001047223.5"/>
</dbReference>
<dbReference type="SMR" id="Q9NAN2"/>
<dbReference type="BioGRID" id="38534">
    <property type="interactions" value="52"/>
</dbReference>
<dbReference type="DIP" id="DIP-26707N"/>
<dbReference type="FunCoup" id="Q9NAN2">
    <property type="interactions" value="1746"/>
</dbReference>
<dbReference type="IntAct" id="Q9NAN2">
    <property type="interactions" value="24"/>
</dbReference>
<dbReference type="STRING" id="6239.T26E3.3a.1"/>
<dbReference type="iPTMnet" id="Q9NAN2"/>
<dbReference type="PaxDb" id="6239-T26E3.3a.1"/>
<dbReference type="PeptideAtlas" id="Q9NAN2"/>
<dbReference type="EnsemblMetazoa" id="T26E3.3a.1">
    <molecule id="Q9NAN2-1"/>
    <property type="protein sequence ID" value="T26E3.3a.1"/>
    <property type="gene ID" value="WBGene00003921"/>
</dbReference>
<dbReference type="EnsemblMetazoa" id="T26E3.3a.2">
    <molecule id="Q9NAN2-1"/>
    <property type="protein sequence ID" value="T26E3.3a.2"/>
    <property type="gene ID" value="WBGene00003921"/>
</dbReference>
<dbReference type="EnsemblMetazoa" id="T26E3.3b.1">
    <molecule id="Q9NAN2-2"/>
    <property type="protein sequence ID" value="T26E3.3b.1"/>
    <property type="gene ID" value="WBGene00003921"/>
</dbReference>
<dbReference type="GeneID" id="173137"/>
<dbReference type="KEGG" id="cel:CELE_T26E3.3"/>
<dbReference type="UCSC" id="T26E3.3b">
    <property type="organism name" value="c. elegans"/>
</dbReference>
<dbReference type="AGR" id="WB:WBGene00003921"/>
<dbReference type="CTD" id="32752"/>
<dbReference type="WormBase" id="T26E3.3a">
    <molecule id="Q9NAN2-1"/>
    <property type="protein sequence ID" value="CE28089"/>
    <property type="gene ID" value="WBGene00003921"/>
    <property type="gene designation" value="par-6"/>
</dbReference>
<dbReference type="WormBase" id="T26E3.3b">
    <molecule id="Q9NAN2-2"/>
    <property type="protein sequence ID" value="CE40130"/>
    <property type="gene ID" value="WBGene00003921"/>
    <property type="gene designation" value="par-6"/>
</dbReference>
<dbReference type="eggNOG" id="KOG3606">
    <property type="taxonomic scope" value="Eukaryota"/>
</dbReference>
<dbReference type="GeneTree" id="ENSGT00950000183211"/>
<dbReference type="HOGENOM" id="CLU_040653_0_1_1"/>
<dbReference type="InParanoid" id="Q9NAN2"/>
<dbReference type="OMA" id="SQGSPCW"/>
<dbReference type="OrthoDB" id="5868434at2759"/>
<dbReference type="PhylomeDB" id="Q9NAN2"/>
<dbReference type="Reactome" id="R-CEL-2173791">
    <property type="pathway name" value="TGF-beta receptor signaling in EMT (epithelial to mesenchymal transition)"/>
</dbReference>
<dbReference type="Reactome" id="R-CEL-9013149">
    <property type="pathway name" value="RAC1 GTPase cycle"/>
</dbReference>
<dbReference type="Reactome" id="R-CEL-9013420">
    <property type="pathway name" value="RHOU GTPase cycle"/>
</dbReference>
<dbReference type="Reactome" id="R-CEL-9013424">
    <property type="pathway name" value="RHOV GTPase cycle"/>
</dbReference>
<dbReference type="PRO" id="PR:Q9NAN2"/>
<dbReference type="Proteomes" id="UP000001940">
    <property type="component" value="Chromosome I"/>
</dbReference>
<dbReference type="Bgee" id="WBGene00003921">
    <property type="expression patterns" value="Expressed in pharyngeal muscle cell (C elegans) and 4 other cell types or tissues"/>
</dbReference>
<dbReference type="GO" id="GO:0005923">
    <property type="term" value="C:bicellular tight junction"/>
    <property type="evidence" value="ECO:0007669"/>
    <property type="project" value="UniProtKB-SubCell"/>
</dbReference>
<dbReference type="GO" id="GO:0005938">
    <property type="term" value="C:cell cortex"/>
    <property type="evidence" value="ECO:0000314"/>
    <property type="project" value="UniProtKB"/>
</dbReference>
<dbReference type="GO" id="GO:0031234">
    <property type="term" value="C:extrinsic component of cytoplasmic side of plasma membrane"/>
    <property type="evidence" value="ECO:0000314"/>
    <property type="project" value="GO_Central"/>
</dbReference>
<dbReference type="GO" id="GO:0043186">
    <property type="term" value="C:P granule"/>
    <property type="evidence" value="ECO:0000314"/>
    <property type="project" value="UniProtKB"/>
</dbReference>
<dbReference type="GO" id="GO:0005080">
    <property type="term" value="F:protein kinase C binding"/>
    <property type="evidence" value="ECO:0000353"/>
    <property type="project" value="WormBase"/>
</dbReference>
<dbReference type="GO" id="GO:0031267">
    <property type="term" value="F:small GTPase binding"/>
    <property type="evidence" value="ECO:0000353"/>
    <property type="project" value="WormBase"/>
</dbReference>
<dbReference type="GO" id="GO:0007155">
    <property type="term" value="P:cell adhesion"/>
    <property type="evidence" value="ECO:0000315"/>
    <property type="project" value="UniProtKB"/>
</dbReference>
<dbReference type="GO" id="GO:0030154">
    <property type="term" value="P:cell differentiation"/>
    <property type="evidence" value="ECO:0007669"/>
    <property type="project" value="UniProtKB-KW"/>
</dbReference>
<dbReference type="GO" id="GO:0051301">
    <property type="term" value="P:cell division"/>
    <property type="evidence" value="ECO:0007669"/>
    <property type="project" value="UniProtKB-KW"/>
</dbReference>
<dbReference type="GO" id="GO:0007098">
    <property type="term" value="P:centrosome cycle"/>
    <property type="evidence" value="ECO:0000318"/>
    <property type="project" value="GO_Central"/>
</dbReference>
<dbReference type="GO" id="GO:0040001">
    <property type="term" value="P:establishment of mitotic spindle localization"/>
    <property type="evidence" value="ECO:0000316"/>
    <property type="project" value="UniProtKB"/>
</dbReference>
<dbReference type="GO" id="GO:0007163">
    <property type="term" value="P:establishment or maintenance of cell polarity"/>
    <property type="evidence" value="ECO:0000316"/>
    <property type="project" value="UniProtKB"/>
</dbReference>
<dbReference type="GO" id="GO:0007369">
    <property type="term" value="P:gastrulation"/>
    <property type="evidence" value="ECO:0000315"/>
    <property type="project" value="UniProtKB"/>
</dbReference>
<dbReference type="GO" id="GO:0008406">
    <property type="term" value="P:gonad development"/>
    <property type="evidence" value="ECO:0000315"/>
    <property type="project" value="UniProtKB"/>
</dbReference>
<dbReference type="GO" id="GO:0007506">
    <property type="term" value="P:gonadal mesoderm development"/>
    <property type="evidence" value="ECO:0007669"/>
    <property type="project" value="UniProtKB-KW"/>
</dbReference>
<dbReference type="GO" id="GO:0009949">
    <property type="term" value="P:polarity specification of anterior/posterior axis"/>
    <property type="evidence" value="ECO:0000315"/>
    <property type="project" value="WormBase"/>
</dbReference>
<dbReference type="GO" id="GO:0007338">
    <property type="term" value="P:single fertilization"/>
    <property type="evidence" value="ECO:0007669"/>
    <property type="project" value="UniProtKB-KW"/>
</dbReference>
<dbReference type="CDD" id="cd06403">
    <property type="entry name" value="PB1_Par6"/>
    <property type="match status" value="1"/>
</dbReference>
<dbReference type="CDD" id="cd06718">
    <property type="entry name" value="PDZ_Par6-like"/>
    <property type="match status" value="1"/>
</dbReference>
<dbReference type="FunFam" id="3.10.20.90:FF:000031">
    <property type="entry name" value="Partitioning defective 6 homolog alpha"/>
    <property type="match status" value="1"/>
</dbReference>
<dbReference type="FunFam" id="2.30.42.10:FF:000030">
    <property type="entry name" value="Partitioning defective 6 homolog beta"/>
    <property type="match status" value="1"/>
</dbReference>
<dbReference type="Gene3D" id="2.30.42.10">
    <property type="match status" value="1"/>
</dbReference>
<dbReference type="Gene3D" id="3.10.20.90">
    <property type="entry name" value="Phosphatidylinositol 3-kinase Catalytic Subunit, Chain A, domain 1"/>
    <property type="match status" value="1"/>
</dbReference>
<dbReference type="InterPro" id="IPR051741">
    <property type="entry name" value="PAR6_homolog"/>
</dbReference>
<dbReference type="InterPro" id="IPR053793">
    <property type="entry name" value="PB1-like"/>
</dbReference>
<dbReference type="InterPro" id="IPR000270">
    <property type="entry name" value="PB1_dom"/>
</dbReference>
<dbReference type="InterPro" id="IPR034868">
    <property type="entry name" value="PB1_Par6"/>
</dbReference>
<dbReference type="InterPro" id="IPR001478">
    <property type="entry name" value="PDZ"/>
</dbReference>
<dbReference type="InterPro" id="IPR036034">
    <property type="entry name" value="PDZ_sf"/>
</dbReference>
<dbReference type="PANTHER" id="PTHR14102:SF11">
    <property type="entry name" value="LD29223P"/>
    <property type="match status" value="1"/>
</dbReference>
<dbReference type="PANTHER" id="PTHR14102">
    <property type="entry name" value="PAR-6-RELATED"/>
    <property type="match status" value="1"/>
</dbReference>
<dbReference type="Pfam" id="PF00564">
    <property type="entry name" value="PB1"/>
    <property type="match status" value="1"/>
</dbReference>
<dbReference type="Pfam" id="PF00595">
    <property type="entry name" value="PDZ"/>
    <property type="match status" value="1"/>
</dbReference>
<dbReference type="SMART" id="SM00666">
    <property type="entry name" value="PB1"/>
    <property type="match status" value="1"/>
</dbReference>
<dbReference type="SMART" id="SM00228">
    <property type="entry name" value="PDZ"/>
    <property type="match status" value="1"/>
</dbReference>
<dbReference type="SUPFAM" id="SSF54277">
    <property type="entry name" value="CAD &amp; PB1 domains"/>
    <property type="match status" value="1"/>
</dbReference>
<dbReference type="SUPFAM" id="SSF50156">
    <property type="entry name" value="PDZ domain-like"/>
    <property type="match status" value="1"/>
</dbReference>
<dbReference type="PROSITE" id="PS51745">
    <property type="entry name" value="PB1"/>
    <property type="match status" value="1"/>
</dbReference>
<dbReference type="PROSITE" id="PS50106">
    <property type="entry name" value="PDZ"/>
    <property type="match status" value="1"/>
</dbReference>
<accession>Q9NAN2</accession>
<accession>Q1ZXS2</accession>
<accession>Q9XY93</accession>
<protein>
    <recommendedName>
        <fullName>Partitioning defective protein 6</fullName>
    </recommendedName>
</protein>
<gene>
    <name evidence="15" type="primary">par-6</name>
    <name type="ORF">T26E3.3</name>
</gene>
<comment type="function">
    <text evidence="5 7 8 10 11 12">Necessary for apicobasal and anterior-posterior asymmetries associated with cell adhesion and gastrulation during the first few cell cycles of embryogenesis (PubMed:8898226). Required for localizing/ maintaining par-3 at the cell periphery (PubMed:8898226, PubMed:9834192). Regulates mes-1 expression and/or localization pattern during early embryogenesis (PubMed:11003841). Acts together with par-3 and pkc-3 in maintaining epithelial cell polarity in the distal spermatheca (PubMed:13129846, PubMed:15151982). Plays a role in endosome and Golgi body positioning (PubMed:22634595).</text>
</comment>
<comment type="subunit">
    <text evidence="6 11">Interacts with par-3, required for its peripheral localization, and with cdc-42, required for the activation of a par-3/par-6/pkc-3 complex.</text>
</comment>
<comment type="interaction">
    <interactant intactId="EBI-318782">
        <id>Q9NAN2</id>
    </interactant>
    <interactant intactId="EBI-2422468">
        <id>Q8MXV3</id>
        <label>ccep-135</label>
    </interactant>
    <organismsDiffer>false</organismsDiffer>
    <experiments>2</experiments>
</comment>
<comment type="interaction">
    <interactant intactId="EBI-318782">
        <id>Q9NAN2</id>
    </interactant>
    <interactant intactId="EBI-11465290">
        <id>P34288-2</id>
        <label>pac-1</label>
    </interactant>
    <organismsDiffer>false</organismsDiffer>
    <experiments>3</experiments>
</comment>
<comment type="interaction">
    <interactant intactId="EBI-318782">
        <id>Q9NAN2</id>
    </interactant>
    <interactant intactId="EBI-319158">
        <id>Q19266</id>
        <label>pkc-3</label>
    </interactant>
    <organismsDiffer>false</organismsDiffer>
    <experiments>4</experiments>
</comment>
<comment type="interaction">
    <interactant intactId="EBI-318782">
        <id>Q9NAN2</id>
    </interactant>
    <interactant intactId="EBI-315012">
        <id>Q20709</id>
        <label>tra-4</label>
    </interactant>
    <organismsDiffer>false</organismsDiffer>
    <experiments>5</experiments>
</comment>
<comment type="interaction">
    <interactant intactId="EBI-318782">
        <id>Q9NAN2</id>
    </interactant>
    <interactant intactId="EBI-2913259">
        <id>Q9NEZ5</id>
        <label>unc-95</label>
    </interactant>
    <organismsDiffer>false</organismsDiffer>
    <experiments>3</experiments>
</comment>
<comment type="subcellular location">
    <subcellularLocation>
        <location evidence="12">Cytoplasm</location>
    </subcellularLocation>
    <subcellularLocation>
        <location evidence="12">Cell membrane</location>
        <topology evidence="12">Peripheral membrane protein</topology>
    </subcellularLocation>
    <subcellularLocation>
        <location evidence="1">Cell junction</location>
        <location evidence="1">Tight junction</location>
    </subcellularLocation>
    <text evidence="9 12">Membrane-associated at the periphery of blastomeres up to about the 50 cell stage. Peripheral expression is asymmetric in the cells of the germline lineage P0, P1, P2 and P3 (PubMed:9834192). Asymmetric distribution in the 1-cell embryo is regulated by the cye-1/cdk-2 complex (PubMed:17115027).</text>
</comment>
<comment type="alternative products">
    <event type="alternative splicing"/>
    <isoform>
        <id>Q9NAN2-1</id>
        <name>a</name>
        <sequence type="displayed"/>
    </isoform>
    <isoform>
        <id>Q9NAN2-2</id>
        <name>b</name>
        <sequence type="described" ref="VSP_034690"/>
    </isoform>
</comment>
<comment type="tissue specificity">
    <text evidence="7 8 12">Colocalized with par-3 at all stages in early embryos, at the anterior cortex of the embryo. Patchy expression observed at the periphery after completion of meiosis I and in meiosis II, which on completion of metaphase II, is restricted to the anterior 85% of embryo length; this decreases to 55% in embryos between prophase and telophase of the first mitosis. During the first cleavage, expression is detected in the advancing furrow. Along with pkc-3, is unable to associate with the apical cortex of cells that lack par-3. Transiently coexpressed and colocalized with par-3 and pkc-3, asymmetrically in the developing somatic gonad, including the spermathecal precursor cells of L4 larvae.</text>
</comment>
<comment type="developmental stage">
    <text evidence="11">Expressed both maternally and zygotically.</text>
</comment>
<comment type="disruption phenotype">
    <text evidence="10">RNAi-mediated knockdown results in a diffuse distribution of early, recycling and late endosomes and Golgi bodies and reduced intensities of markers for these organelles.</text>
</comment>
<comment type="similarity">
    <text evidence="12">Belongs to the PAR6 family.</text>
</comment>
<proteinExistence type="evidence at protein level"/>